<organism>
    <name type="scientific">Gorilla gorilla gorilla</name>
    <name type="common">Western lowland gorilla</name>
    <dbReference type="NCBI Taxonomy" id="9595"/>
    <lineage>
        <taxon>Eukaryota</taxon>
        <taxon>Metazoa</taxon>
        <taxon>Chordata</taxon>
        <taxon>Craniata</taxon>
        <taxon>Vertebrata</taxon>
        <taxon>Euteleostomi</taxon>
        <taxon>Mammalia</taxon>
        <taxon>Eutheria</taxon>
        <taxon>Euarchontoglires</taxon>
        <taxon>Primates</taxon>
        <taxon>Haplorrhini</taxon>
        <taxon>Catarrhini</taxon>
        <taxon>Hominidae</taxon>
        <taxon>Gorilla</taxon>
    </lineage>
</organism>
<evidence type="ECO:0000250" key="1"/>
<evidence type="ECO:0000250" key="2">
    <source>
        <dbReference type="UniProtKB" id="P01225"/>
    </source>
</evidence>
<evidence type="ECO:0000305" key="3"/>
<feature type="signal peptide" evidence="1">
    <location>
        <begin position="1"/>
        <end position="20"/>
    </location>
</feature>
<feature type="chain" id="PRO_0000285558" description="Follitropin subunit beta">
    <location>
        <begin position="21"/>
        <end position="129"/>
    </location>
</feature>
<feature type="glycosylation site" description="N-linked (GlcNAc...) asparagine" evidence="2">
    <location>
        <position position="25"/>
    </location>
</feature>
<feature type="glycosylation site" description="N-linked (GlcNAc...) asparagine" evidence="2">
    <location>
        <position position="42"/>
    </location>
</feature>
<feature type="disulfide bond" evidence="2">
    <location>
        <begin position="21"/>
        <end position="69"/>
    </location>
</feature>
<feature type="disulfide bond" evidence="2">
    <location>
        <begin position="35"/>
        <end position="84"/>
    </location>
</feature>
<feature type="disulfide bond" evidence="2">
    <location>
        <begin position="38"/>
        <end position="122"/>
    </location>
</feature>
<feature type="disulfide bond" evidence="2">
    <location>
        <begin position="46"/>
        <end position="100"/>
    </location>
</feature>
<feature type="disulfide bond" evidence="2">
    <location>
        <begin position="50"/>
        <end position="102"/>
    </location>
</feature>
<feature type="disulfide bond" evidence="2">
    <location>
        <begin position="105"/>
        <end position="112"/>
    </location>
</feature>
<dbReference type="EMBL" id="DQ304480">
    <property type="protein sequence ID" value="ABC72311.1"/>
    <property type="molecule type" value="Genomic_DNA"/>
</dbReference>
<dbReference type="RefSeq" id="XP_004050915.5">
    <property type="nucleotide sequence ID" value="XM_004050867.5"/>
</dbReference>
<dbReference type="RefSeq" id="XP_004050916.5">
    <property type="nucleotide sequence ID" value="XM_004050868.5"/>
</dbReference>
<dbReference type="RefSeq" id="XP_055212880.2">
    <property type="nucleotide sequence ID" value="XM_055356905.2"/>
</dbReference>
<dbReference type="SMR" id="A1BN60"/>
<dbReference type="FunCoup" id="A1BN60">
    <property type="interactions" value="602"/>
</dbReference>
<dbReference type="STRING" id="9593.ENSGGOP00000017457"/>
<dbReference type="GlyCosmos" id="A1BN60">
    <property type="glycosylation" value="2 sites, No reported glycans"/>
</dbReference>
<dbReference type="GeneID" id="101143526"/>
<dbReference type="eggNOG" id="ENOG502S39C">
    <property type="taxonomic scope" value="Eukaryota"/>
</dbReference>
<dbReference type="HOGENOM" id="CLU_126319_3_0_1"/>
<dbReference type="InParanoid" id="A1BN60"/>
<dbReference type="Proteomes" id="UP000001519">
    <property type="component" value="Unplaced"/>
</dbReference>
<dbReference type="GO" id="GO:0005737">
    <property type="term" value="C:cytoplasm"/>
    <property type="evidence" value="ECO:0000318"/>
    <property type="project" value="GO_Central"/>
</dbReference>
<dbReference type="GO" id="GO:0005615">
    <property type="term" value="C:extracellular space"/>
    <property type="evidence" value="ECO:0000250"/>
    <property type="project" value="UniProtKB"/>
</dbReference>
<dbReference type="GO" id="GO:0016914">
    <property type="term" value="C:follicle-stimulating hormone complex"/>
    <property type="evidence" value="ECO:0000250"/>
    <property type="project" value="UniProtKB"/>
</dbReference>
<dbReference type="GO" id="GO:0016913">
    <property type="term" value="F:follicle-stimulating hormone activity"/>
    <property type="evidence" value="ECO:0000250"/>
    <property type="project" value="UniProtKB"/>
</dbReference>
<dbReference type="GO" id="GO:0042699">
    <property type="term" value="P:follicle-stimulating hormone signaling pathway"/>
    <property type="evidence" value="ECO:0000318"/>
    <property type="project" value="GO_Central"/>
</dbReference>
<dbReference type="GO" id="GO:0007186">
    <property type="term" value="P:G protein-coupled receptor signaling pathway"/>
    <property type="evidence" value="ECO:0000250"/>
    <property type="project" value="UniProtKB"/>
</dbReference>
<dbReference type="GO" id="GO:0010469">
    <property type="term" value="P:regulation of signaling receptor activity"/>
    <property type="evidence" value="ECO:0000250"/>
    <property type="project" value="UniProtKB"/>
</dbReference>
<dbReference type="CDD" id="cd00069">
    <property type="entry name" value="GHB_like"/>
    <property type="match status" value="1"/>
</dbReference>
<dbReference type="FunFam" id="2.10.90.10:FF:000007">
    <property type="entry name" value="Luteinizing hormone beta subunit"/>
    <property type="match status" value="1"/>
</dbReference>
<dbReference type="Gene3D" id="2.10.90.10">
    <property type="entry name" value="Cystine-knot cytokines"/>
    <property type="match status" value="1"/>
</dbReference>
<dbReference type="InterPro" id="IPR029034">
    <property type="entry name" value="Cystine-knot_cytokine"/>
</dbReference>
<dbReference type="InterPro" id="IPR006208">
    <property type="entry name" value="Glyco_hormone_CN"/>
</dbReference>
<dbReference type="InterPro" id="IPR001545">
    <property type="entry name" value="Gonadotropin_bsu"/>
</dbReference>
<dbReference type="InterPro" id="IPR018245">
    <property type="entry name" value="Gonadotropin_bsu_CS"/>
</dbReference>
<dbReference type="PANTHER" id="PTHR11515:SF17">
    <property type="entry name" value="FOLLITROPIN SUBUNIT BETA"/>
    <property type="match status" value="1"/>
</dbReference>
<dbReference type="PANTHER" id="PTHR11515">
    <property type="entry name" value="GLYCOPROTEIN HORMONE BETA CHAIN"/>
    <property type="match status" value="1"/>
</dbReference>
<dbReference type="Pfam" id="PF00007">
    <property type="entry name" value="Cys_knot"/>
    <property type="match status" value="1"/>
</dbReference>
<dbReference type="SMART" id="SM00068">
    <property type="entry name" value="GHB"/>
    <property type="match status" value="1"/>
</dbReference>
<dbReference type="SUPFAM" id="SSF57501">
    <property type="entry name" value="Cystine-knot cytokines"/>
    <property type="match status" value="1"/>
</dbReference>
<dbReference type="PROSITE" id="PS00261">
    <property type="entry name" value="GLYCO_HORMONE_BETA_1"/>
    <property type="match status" value="1"/>
</dbReference>
<dbReference type="PROSITE" id="PS00689">
    <property type="entry name" value="GLYCO_HORMONE_BETA_2"/>
    <property type="match status" value="1"/>
</dbReference>
<sequence length="129" mass="14686">MKTLQFFFLFCCWKAICCNSCELTNITIAIEKEECRFCISINTTWCAGYCYTRDLVYKDPARPNIQKTCTFKELVYETVRVPGCAHHADSLYTYPVATQCHCGKCDSDSTDCTVRGLGPSYCSFGEMKE</sequence>
<protein>
    <recommendedName>
        <fullName>Follitropin subunit beta</fullName>
    </recommendedName>
    <alternativeName>
        <fullName>Follicle-stimulating hormone beta subunit</fullName>
        <shortName>FSH-B</shortName>
        <shortName>FSH-beta</shortName>
    </alternativeName>
    <alternativeName>
        <fullName>Follitropin beta chain</fullName>
    </alternativeName>
</protein>
<gene>
    <name type="primary">FSHB</name>
</gene>
<keyword id="KW-1015">Disulfide bond</keyword>
<keyword id="KW-0325">Glycoprotein</keyword>
<keyword id="KW-0372">Hormone</keyword>
<keyword id="KW-1185">Reference proteome</keyword>
<keyword id="KW-0964">Secreted</keyword>
<keyword id="KW-0732">Signal</keyword>
<name>FSHB_GORGO</name>
<comment type="function">
    <text evidence="2">Together with the alpha chain CGA constitutes follitropin, the follicle-stimulating hormone, and provides its biological specificity to the hormone heterodimer. Binds FSHR, a G protein-coupled receptor, on target cells to activate downstream signaling pathways. Follitropin is involved in follicle development and spermatogenesis in reproductive organs.</text>
</comment>
<comment type="subunit">
    <text evidence="2">Heterodimer. The active follitropin is a heterodimer composed of an alpha chain/CGA shared with other hormones and a unique beta chain/FSHB shown here.</text>
</comment>
<comment type="subcellular location">
    <subcellularLocation>
        <location evidence="2">Secreted</location>
    </subcellularLocation>
    <text evidence="2">Efficient secretion requires dimerization with CGA.</text>
</comment>
<comment type="similarity">
    <text evidence="3">Belongs to the glycoprotein hormones subunit beta family.</text>
</comment>
<reference key="1">
    <citation type="journal article" date="2007" name="Ann. Hum. Genet.">
        <title>Haplotype structure of FSHB, the beta-subunit gene for fertility-associated follicle-stimulating hormone: possible influence of balancing selection.</title>
        <authorList>
            <person name="Grigorova M."/>
            <person name="Rull K."/>
            <person name="Laan M."/>
        </authorList>
    </citation>
    <scope>NUCLEOTIDE SEQUENCE [GENOMIC DNA]</scope>
</reference>
<accession>A1BN60</accession>
<proteinExistence type="inferred from homology"/>